<accession>Q8T9Z7</accession>
<gene>
    <name evidence="6" type="primary">PNP</name>
</gene>
<comment type="function">
    <text evidence="1 2 3">As part of the purine salvage pathway, catalyzes the phosphorolytic breakdown of the N-glycosidic bond in the beta-(deoxy)ribonucleoside molecules, with the formation of the corresponding free purine bases and pentose-1-phosphate (PubMed:11707439, PubMed:30602534). Preferentially acts on inosine and guanosine, and to a lesser extent on 2'-deoxyinosine and 2'-deoxyguanosine (PubMed:11707439). Also catalyzes the phosphorylation of S-methyl-5'-thioinosine (MTI) to hypoxanthine; MTI is produced by adenosine deaminase (ADA)-mediated breakdown of S-methyl-5'-thioadenosine (MTA), a major by-product of polyamine biosynthesis (By similarity). Generates hypoxanthine from both the purine salvage pathway and from polyamine metabolism which is required for nucleic acids synthesis (By similarity). Has no activity towards adenosine (PubMed:11707439).</text>
</comment>
<comment type="catalytic activity">
    <reaction evidence="2 3">
        <text>inosine + phosphate = alpha-D-ribose 1-phosphate + hypoxanthine</text>
        <dbReference type="Rhea" id="RHEA:27646"/>
        <dbReference type="ChEBI" id="CHEBI:17368"/>
        <dbReference type="ChEBI" id="CHEBI:17596"/>
        <dbReference type="ChEBI" id="CHEBI:43474"/>
        <dbReference type="ChEBI" id="CHEBI:57720"/>
        <dbReference type="EC" id="2.4.2.1"/>
    </reaction>
</comment>
<comment type="catalytic activity">
    <reaction evidence="2">
        <text>guanosine + phosphate = alpha-D-ribose 1-phosphate + guanine</text>
        <dbReference type="Rhea" id="RHEA:13233"/>
        <dbReference type="ChEBI" id="CHEBI:16235"/>
        <dbReference type="ChEBI" id="CHEBI:16750"/>
        <dbReference type="ChEBI" id="CHEBI:43474"/>
        <dbReference type="ChEBI" id="CHEBI:57720"/>
        <dbReference type="EC" id="2.4.2.1"/>
    </reaction>
</comment>
<comment type="catalytic activity">
    <reaction evidence="2">
        <text>2'-deoxyguanosine + phosphate = 2-deoxy-alpha-D-ribose 1-phosphate + guanine</text>
        <dbReference type="Rhea" id="RHEA:27738"/>
        <dbReference type="ChEBI" id="CHEBI:16235"/>
        <dbReference type="ChEBI" id="CHEBI:17172"/>
        <dbReference type="ChEBI" id="CHEBI:43474"/>
        <dbReference type="ChEBI" id="CHEBI:57259"/>
        <dbReference type="EC" id="2.4.2.1"/>
    </reaction>
</comment>
<comment type="catalytic activity">
    <reaction evidence="2">
        <text>2'-deoxyinosine + phosphate = 2-deoxy-alpha-D-ribose 1-phosphate + hypoxanthine</text>
        <dbReference type="Rhea" id="RHEA:27750"/>
        <dbReference type="ChEBI" id="CHEBI:17368"/>
        <dbReference type="ChEBI" id="CHEBI:28997"/>
        <dbReference type="ChEBI" id="CHEBI:43474"/>
        <dbReference type="ChEBI" id="CHEBI:57259"/>
        <dbReference type="EC" id="2.4.2.1"/>
    </reaction>
</comment>
<comment type="catalytic activity">
    <reaction evidence="1">
        <text>S-methyl-5'-thioinosine + phosphate = 5-(methylsulfanyl)-alpha-D-ribose 1-phosphate + hypoxanthine</text>
        <dbReference type="Rhea" id="RHEA:30643"/>
        <dbReference type="ChEBI" id="CHEBI:17368"/>
        <dbReference type="ChEBI" id="CHEBI:43474"/>
        <dbReference type="ChEBI" id="CHEBI:48595"/>
        <dbReference type="ChEBI" id="CHEBI:58533"/>
        <dbReference type="EC" id="2.4.2.44"/>
    </reaction>
</comment>
<comment type="activity regulation">
    <text evidence="2 3">Inhibited by Immucillin-H (PubMed:11707439, PubMed:30602534). Inhibited by antimalaria drugs quinine and mefloquine (PubMed:30602534).</text>
</comment>
<comment type="biophysicochemical properties">
    <kinetics>
        <KM evidence="2">5 uM for inosine</KM>
        <KM evidence="2">104 uM for 2'-deoxyinosine</KM>
        <KM evidence="2">9.7 uM for guanosine</KM>
        <KM evidence="2">69 uM for 2'-deoxyguanosine</KM>
        <KM evidence="2">85 uM for uridine</KM>
        <text evidence="2">kcat is 0.34 sec(-1) with inosine as substrate (PubMed:11707439). kcat is 0.14 sec(-1) with guanosine as substrate (PubMed:11707439). kcat is 0.64 sec(-1) with 2'-deoxyinosine as substrate (PubMed:11707439). kcat is 0.2 sec(-1) with 2'-deoxyguanosine as substrate (PubMed:11707439). kcat is 0.026 sec(-1) with uridine as substrate (PubMed:11707439).</text>
    </kinetics>
</comment>
<comment type="pathway">
    <text evidence="2">Purine metabolism; purine nucleoside salvage.</text>
</comment>
<comment type="subunit">
    <text evidence="1">Homohexamer; trimer of homodimers.</text>
</comment>
<comment type="similarity">
    <text evidence="5">Belongs to the PNP/MTAP phosphorylase family.</text>
</comment>
<feature type="chain" id="PRO_0000451826" description="Purine nucleoside phosphorylase">
    <location>
        <begin position="1"/>
        <end position="245"/>
    </location>
</feature>
<feature type="active site" description="Proton donor" evidence="1">
    <location>
        <position position="206"/>
    </location>
</feature>
<feature type="binding site" evidence="1">
    <location>
        <position position="7"/>
    </location>
    <ligand>
        <name>a purine D-ribonucleoside</name>
        <dbReference type="ChEBI" id="CHEBI:142355"/>
        <note>ligand shared between dimeric partners</note>
    </ligand>
</feature>
<feature type="binding site" description="in other chain" evidence="3 8">
    <location>
        <begin position="23"/>
        <end position="27"/>
    </location>
    <ligand>
        <name>phosphate</name>
        <dbReference type="ChEBI" id="CHEBI:43474"/>
        <note>ligand shared between dimeric partners</note>
    </ligand>
</feature>
<feature type="binding site" evidence="1">
    <location>
        <position position="45"/>
    </location>
    <ligand>
        <name>phosphate</name>
        <dbReference type="ChEBI" id="CHEBI:43474"/>
        <note>ligand shared between dimeric partners</note>
    </ligand>
</feature>
<feature type="binding site" description="in other chain" evidence="3 7 8">
    <location>
        <begin position="88"/>
        <end position="91"/>
    </location>
    <ligand>
        <name>phosphate</name>
        <dbReference type="ChEBI" id="CHEBI:43474"/>
        <note>ligand shared between dimeric partners</note>
    </ligand>
</feature>
<feature type="binding site" description="in other chain" evidence="1">
    <location>
        <begin position="183"/>
        <end position="184"/>
    </location>
    <ligand>
        <name>a purine D-ribonucleoside</name>
        <dbReference type="ChEBI" id="CHEBI:142355"/>
        <note>ligand shared between dimeric partners</note>
    </ligand>
</feature>
<feature type="turn" evidence="9">
    <location>
        <begin position="6"/>
        <end position="8"/>
    </location>
</feature>
<feature type="helix" evidence="9">
    <location>
        <begin position="12"/>
        <end position="14"/>
    </location>
</feature>
<feature type="strand" evidence="9">
    <location>
        <begin position="17"/>
        <end position="23"/>
    </location>
</feature>
<feature type="helix" evidence="9">
    <location>
        <begin position="25"/>
        <end position="32"/>
    </location>
</feature>
<feature type="strand" evidence="9">
    <location>
        <begin position="35"/>
        <end position="44"/>
    </location>
</feature>
<feature type="strand" evidence="9">
    <location>
        <begin position="47"/>
        <end position="54"/>
    </location>
</feature>
<feature type="strand" evidence="9">
    <location>
        <begin position="57"/>
        <end position="63"/>
    </location>
</feature>
<feature type="helix" evidence="9">
    <location>
        <begin position="68"/>
        <end position="80"/>
    </location>
</feature>
<feature type="strand" evidence="9">
    <location>
        <begin position="85"/>
        <end position="95"/>
    </location>
</feature>
<feature type="turn" evidence="9">
    <location>
        <begin position="97"/>
        <end position="99"/>
    </location>
</feature>
<feature type="strand" evidence="9">
    <location>
        <begin position="105"/>
        <end position="116"/>
    </location>
</feature>
<feature type="helix" evidence="9">
    <location>
        <begin position="117"/>
        <end position="121"/>
    </location>
</feature>
<feature type="helix" evidence="9">
    <location>
        <begin position="132"/>
        <end position="144"/>
    </location>
</feature>
<feature type="strand" evidence="9">
    <location>
        <begin position="150"/>
        <end position="158"/>
    </location>
</feature>
<feature type="strand" evidence="9">
    <location>
        <begin position="164"/>
        <end position="166"/>
    </location>
</feature>
<feature type="helix" evidence="9">
    <location>
        <begin position="170"/>
        <end position="175"/>
    </location>
</feature>
<feature type="strand" evidence="9">
    <location>
        <begin position="180"/>
        <end position="184"/>
    </location>
</feature>
<feature type="helix" evidence="9">
    <location>
        <begin position="185"/>
        <end position="195"/>
    </location>
</feature>
<feature type="strand" evidence="9">
    <location>
        <begin position="198"/>
        <end position="205"/>
    </location>
</feature>
<feature type="helix" evidence="9">
    <location>
        <begin position="209"/>
        <end position="214"/>
    </location>
</feature>
<feature type="helix" evidence="9">
    <location>
        <begin position="223"/>
        <end position="242"/>
    </location>
</feature>
<proteinExistence type="evidence at protein level"/>
<sequence>MDNLLRHLKISKEQITPVVLVVGDPGRVDKIKVVCDSYVDLAYNREYKSVECHYKGQKFLCVSHGVGSAGCAVCFEELCQNGAKVIIRAGSCGSLQPDLIKRGDICICNAAVREDRVSHLLIHGDFPAVGDFDVYDTLNKCAQELNVPVFNGISVSSDMYYPNKIIPSRLEDYSKANAAVVEMELATLMVIGTLRKVKTGGILIVDGCPFKWDEGDFDNNLVPHQLENMIKIALGACAKLATKYA</sequence>
<protein>
    <recommendedName>
        <fullName evidence="4">Purine nucleoside phosphorylase</fullName>
        <ecNumber evidence="2 3">2.4.2.1</ecNumber>
    </recommendedName>
    <alternativeName>
        <fullName evidence="1">S-methyl-5'-thioinosine phosphorylase</fullName>
        <ecNumber evidence="1">2.4.2.44</ecNumber>
    </alternativeName>
</protein>
<reference evidence="6" key="1">
    <citation type="journal article" date="2002" name="J. Biol. Chem.">
        <title>Transition state analogue inhibitors of purine nucleoside phosphorylase from Plasmodium falciparum.</title>
        <authorList>
            <person name="Kicska G.A."/>
            <person name="Tyler P.C."/>
            <person name="Evans G.B."/>
            <person name="Furneaux R.H."/>
            <person name="Kim K."/>
            <person name="Schramm V.L."/>
        </authorList>
    </citation>
    <scope>NUCLEOTIDE SEQUENCE [GENOMIC DNA]</scope>
    <scope>FUNCTION</scope>
    <scope>CATALYTIC ACTIVITY</scope>
    <scope>ACTIVITY REGULATION</scope>
    <scope>BIOPHYSICOCHEMICAL PROPERTIES</scope>
    <scope>PATHWAY</scope>
    <source>
        <strain evidence="2">FCB</strain>
    </source>
</reference>
<reference evidence="7 8" key="2">
    <citation type="journal article" date="2019" name="Sci. Transl. Med.">
        <title>Identifying purine nucleoside phosphorylase as the target of quinine using cellular thermal shift assay.</title>
        <authorList>
            <person name="Dziekan J.M."/>
            <person name="Yu H."/>
            <person name="Chen D."/>
            <person name="Dai L."/>
            <person name="Wirjanata G."/>
            <person name="Larsson A."/>
            <person name="Prabhu N."/>
            <person name="Sobota R.M."/>
            <person name="Bozdech Z."/>
            <person name="Nordlund P."/>
        </authorList>
    </citation>
    <scope>X-RAY CRYSTALLOGRAPHY (1.66 ANGSTROMS) IN COMPLEX WITH INHIBITORS QUININE AND MEFLOQUINE</scope>
    <scope>FUNCTION</scope>
    <scope>CATALYTIC ACTIVITY</scope>
    <scope>ACTIVITY REGULATION</scope>
    <source>
        <strain evidence="3">FCB</strain>
    </source>
</reference>
<evidence type="ECO:0000250" key="1">
    <source>
        <dbReference type="UniProtKB" id="Q8I3X4"/>
    </source>
</evidence>
<evidence type="ECO:0000269" key="2">
    <source>
    </source>
</evidence>
<evidence type="ECO:0000269" key="3">
    <source>
    </source>
</evidence>
<evidence type="ECO:0000303" key="4">
    <source>
    </source>
</evidence>
<evidence type="ECO:0000305" key="5"/>
<evidence type="ECO:0000312" key="6">
    <source>
        <dbReference type="EMBL" id="AAL74412.1"/>
    </source>
</evidence>
<evidence type="ECO:0007744" key="7">
    <source>
        <dbReference type="PDB" id="5ZNC"/>
    </source>
</evidence>
<evidence type="ECO:0007744" key="8">
    <source>
        <dbReference type="PDB" id="5ZNI"/>
    </source>
</evidence>
<evidence type="ECO:0007829" key="9">
    <source>
        <dbReference type="PDB" id="5ZNC"/>
    </source>
</evidence>
<dbReference type="EC" id="2.4.2.1" evidence="2 3"/>
<dbReference type="EC" id="2.4.2.44" evidence="1"/>
<dbReference type="EMBL" id="AF426159">
    <property type="protein sequence ID" value="AAL74412.1"/>
    <property type="molecule type" value="Genomic_DNA"/>
</dbReference>
<dbReference type="PDB" id="5ZNC">
    <property type="method" value="X-ray"/>
    <property type="resolution" value="1.66 A"/>
    <property type="chains" value="A=1-245"/>
</dbReference>
<dbReference type="PDB" id="5ZNI">
    <property type="method" value="X-ray"/>
    <property type="resolution" value="2.30 A"/>
    <property type="chains" value="A=1-245"/>
</dbReference>
<dbReference type="PDBsum" id="5ZNC"/>
<dbReference type="PDBsum" id="5ZNI"/>
<dbReference type="SMR" id="Q8T9Z7"/>
<dbReference type="BindingDB" id="Q8T9Z7"/>
<dbReference type="ChEMBL" id="CHEMBL5648"/>
<dbReference type="DrugCentral" id="Q8T9Z7"/>
<dbReference type="VEuPathDB" id="PlasmoDB:PF3D7_0513300"/>
<dbReference type="VEuPathDB" id="PlasmoDB:Pf7G8-2_000132500"/>
<dbReference type="VEuPathDB" id="PlasmoDB:Pf7G8_050018500"/>
<dbReference type="VEuPathDB" id="PlasmoDB:PfCD01_050019700"/>
<dbReference type="VEuPathDB" id="PlasmoDB:PfDd2_050018200"/>
<dbReference type="VEuPathDB" id="PlasmoDB:PfGA01_050017700"/>
<dbReference type="VEuPathDB" id="PlasmoDB:PfGB4_050019200"/>
<dbReference type="VEuPathDB" id="PlasmoDB:PfGN01_050018200"/>
<dbReference type="VEuPathDB" id="PlasmoDB:PfHB3_050018200"/>
<dbReference type="VEuPathDB" id="PlasmoDB:PfIT_050018400"/>
<dbReference type="VEuPathDB" id="PlasmoDB:PfKE01_050017700"/>
<dbReference type="VEuPathDB" id="PlasmoDB:PfKH01_050018600"/>
<dbReference type="VEuPathDB" id="PlasmoDB:PfKH02_050018800"/>
<dbReference type="VEuPathDB" id="PlasmoDB:PfML01_050018100"/>
<dbReference type="VEuPathDB" id="PlasmoDB:PfNF135_050018800"/>
<dbReference type="VEuPathDB" id="PlasmoDB:PfNF166_050018400"/>
<dbReference type="VEuPathDB" id="PlasmoDB:PfNF54_050017500"/>
<dbReference type="VEuPathDB" id="PlasmoDB:PfSD01_050018200"/>
<dbReference type="VEuPathDB" id="PlasmoDB:PfSN01_050018500"/>
<dbReference type="VEuPathDB" id="PlasmoDB:PfTG01_050018200"/>
<dbReference type="OMA" id="PQCLLCG"/>
<dbReference type="BioCyc" id="MetaCyc:MONOMER-16356"/>
<dbReference type="BRENDA" id="2.4.2.1">
    <property type="organism ID" value="4889"/>
</dbReference>
<dbReference type="UniPathway" id="UPA00606"/>
<dbReference type="GO" id="GO:0005829">
    <property type="term" value="C:cytosol"/>
    <property type="evidence" value="ECO:0007669"/>
    <property type="project" value="TreeGrafter"/>
</dbReference>
<dbReference type="GO" id="GO:0047975">
    <property type="term" value="F:guanosine phosphorylase activity"/>
    <property type="evidence" value="ECO:0007669"/>
    <property type="project" value="RHEA"/>
</dbReference>
<dbReference type="GO" id="GO:0004731">
    <property type="term" value="F:purine-nucleoside phosphorylase activity"/>
    <property type="evidence" value="ECO:0007669"/>
    <property type="project" value="UniProtKB-EC"/>
</dbReference>
<dbReference type="GO" id="GO:0004850">
    <property type="term" value="F:uridine phosphorylase activity"/>
    <property type="evidence" value="ECO:0007669"/>
    <property type="project" value="TreeGrafter"/>
</dbReference>
<dbReference type="GO" id="GO:0006166">
    <property type="term" value="P:purine ribonucleoside salvage"/>
    <property type="evidence" value="ECO:0007669"/>
    <property type="project" value="UniProtKB-KW"/>
</dbReference>
<dbReference type="GO" id="GO:0006218">
    <property type="term" value="P:uridine catabolic process"/>
    <property type="evidence" value="ECO:0007669"/>
    <property type="project" value="TreeGrafter"/>
</dbReference>
<dbReference type="CDD" id="cd17767">
    <property type="entry name" value="UP_EcUdp-like"/>
    <property type="match status" value="1"/>
</dbReference>
<dbReference type="Gene3D" id="3.40.50.1580">
    <property type="entry name" value="Nucleoside phosphorylase domain"/>
    <property type="match status" value="1"/>
</dbReference>
<dbReference type="InterPro" id="IPR000845">
    <property type="entry name" value="Nucleoside_phosphorylase_d"/>
</dbReference>
<dbReference type="InterPro" id="IPR035994">
    <property type="entry name" value="Nucleoside_phosphorylase_sf"/>
</dbReference>
<dbReference type="PANTHER" id="PTHR43691:SF11">
    <property type="entry name" value="FI09636P-RELATED"/>
    <property type="match status" value="1"/>
</dbReference>
<dbReference type="PANTHER" id="PTHR43691">
    <property type="entry name" value="URIDINE PHOSPHORYLASE"/>
    <property type="match status" value="1"/>
</dbReference>
<dbReference type="Pfam" id="PF01048">
    <property type="entry name" value="PNP_UDP_1"/>
    <property type="match status" value="1"/>
</dbReference>
<dbReference type="SUPFAM" id="SSF53167">
    <property type="entry name" value="Purine and uridine phosphorylases"/>
    <property type="match status" value="1"/>
</dbReference>
<name>PNPH_PLAFA</name>
<keyword id="KW-0002">3D-structure</keyword>
<keyword id="KW-0328">Glycosyltransferase</keyword>
<keyword id="KW-0660">Purine salvage</keyword>
<keyword id="KW-0808">Transferase</keyword>
<organism evidence="6">
    <name type="scientific">Plasmodium falciparum</name>
    <dbReference type="NCBI Taxonomy" id="5833"/>
    <lineage>
        <taxon>Eukaryota</taxon>
        <taxon>Sar</taxon>
        <taxon>Alveolata</taxon>
        <taxon>Apicomplexa</taxon>
        <taxon>Aconoidasida</taxon>
        <taxon>Haemosporida</taxon>
        <taxon>Plasmodiidae</taxon>
        <taxon>Plasmodium</taxon>
        <taxon>Plasmodium (Laverania)</taxon>
    </lineage>
</organism>